<protein>
    <recommendedName>
        <fullName evidence="1">UDP-4-amino-4-deoxy-L-arabinose--oxoglutarate aminotransferase</fullName>
        <ecNumber evidence="1">2.6.1.87</ecNumber>
    </recommendedName>
    <alternativeName>
        <fullName evidence="1">UDP-(beta-L-threo-pentapyranosyl-4''-ulose diphosphate) aminotransferase</fullName>
        <shortName evidence="1">UDP-Ara4O aminotransferase</shortName>
    </alternativeName>
    <alternativeName>
        <fullName evidence="1">UDP-4-amino-4-deoxy-L-arabinose aminotransferase</fullName>
    </alternativeName>
</protein>
<comment type="function">
    <text evidence="1">Catalyzes the conversion of UDP-4-keto-arabinose (UDP-Ara4O) to UDP-4-amino-4-deoxy-L-arabinose (UDP-L-Ara4N). The modified arabinose is attached to lipid A and is required for resistance to polymyxin and cationic antimicrobial peptides.</text>
</comment>
<comment type="catalytic activity">
    <reaction evidence="1">
        <text>UDP-4-amino-4-deoxy-beta-L-arabinose + 2-oxoglutarate = UDP-beta-L-threo-pentopyranos-4-ulose + L-glutamate</text>
        <dbReference type="Rhea" id="RHEA:24710"/>
        <dbReference type="ChEBI" id="CHEBI:16810"/>
        <dbReference type="ChEBI" id="CHEBI:29985"/>
        <dbReference type="ChEBI" id="CHEBI:58708"/>
        <dbReference type="ChEBI" id="CHEBI:58710"/>
        <dbReference type="EC" id="2.6.1.87"/>
    </reaction>
</comment>
<comment type="cofactor">
    <cofactor evidence="1">
        <name>pyridoxal 5'-phosphate</name>
        <dbReference type="ChEBI" id="CHEBI:597326"/>
    </cofactor>
</comment>
<comment type="pathway">
    <text evidence="1">Nucleotide-sugar biosynthesis; UDP-4-deoxy-4-formamido-beta-L-arabinose biosynthesis; UDP-4-deoxy-4-formamido-beta-L-arabinose from UDP-alpha-D-glucuronate: step 2/3.</text>
</comment>
<comment type="pathway">
    <text evidence="1">Bacterial outer membrane biogenesis; lipopolysaccharide biosynthesis.</text>
</comment>
<comment type="subunit">
    <text evidence="1">Homodimer.</text>
</comment>
<comment type="similarity">
    <text evidence="1">Belongs to the DegT/DnrJ/EryC1 family. ArnB subfamily.</text>
</comment>
<accession>Q02R23</accession>
<evidence type="ECO:0000255" key="1">
    <source>
        <dbReference type="HAMAP-Rule" id="MF_01167"/>
    </source>
</evidence>
<proteinExistence type="inferred from homology"/>
<sequence length="382" mass="41825">MSLDFLPFSRPSIGEDEIAAVEQVLRSGWITTGPKNQELEQRFAERLGCRHAVALSSATGALHVTLLALGIGPGDEVITPSLTWVSTANVITLLGATPVFVDVDRDTLMCSAQAVEAAIGPRTRAIVPVHYAGSTLDLEGLRTVAGRHGIALVEDAAHAVGSEYRGRPVGSRGTAIFSFHAIKNLTCAEGAMFVSDDSALAERVRRLKFHGLGVDAYDRLSHGRKPQAEVIEPGFKYNLADLNAALALVQLKRLDALNARRQALAERYLERLAGLPLAPLGLPAHKQRHAWHLFILRIDAEACGLGRDAFMEALKARGIGSGIHFIASHLHHYYRQRQPRLSLPNSEWNSARLCSIPLFPDMRDDDIERVARAIEDILEKRR</sequence>
<dbReference type="EC" id="2.6.1.87" evidence="1"/>
<dbReference type="EMBL" id="CP000438">
    <property type="protein sequence ID" value="ABJ12786.1"/>
    <property type="molecule type" value="Genomic_DNA"/>
</dbReference>
<dbReference type="RefSeq" id="WP_003130049.1">
    <property type="nucleotide sequence ID" value="NZ_CP034244.1"/>
</dbReference>
<dbReference type="SMR" id="Q02R23"/>
<dbReference type="KEGG" id="pau:PA14_18370"/>
<dbReference type="PseudoCAP" id="PA14_18370"/>
<dbReference type="HOGENOM" id="CLU_033332_0_3_6"/>
<dbReference type="BioCyc" id="PAER208963:G1G74-1516-MONOMER"/>
<dbReference type="UniPathway" id="UPA00030"/>
<dbReference type="UniPathway" id="UPA00032">
    <property type="reaction ID" value="UER00493"/>
</dbReference>
<dbReference type="Proteomes" id="UP000000653">
    <property type="component" value="Chromosome"/>
</dbReference>
<dbReference type="GO" id="GO:0016020">
    <property type="term" value="C:membrane"/>
    <property type="evidence" value="ECO:0007669"/>
    <property type="project" value="GOC"/>
</dbReference>
<dbReference type="GO" id="GO:0030170">
    <property type="term" value="F:pyridoxal phosphate binding"/>
    <property type="evidence" value="ECO:0007669"/>
    <property type="project" value="TreeGrafter"/>
</dbReference>
<dbReference type="GO" id="GO:0099620">
    <property type="term" value="F:UDP-4-amino-4-deoxy-L-arabinose aminotransferase"/>
    <property type="evidence" value="ECO:0007669"/>
    <property type="project" value="UniProtKB-EC"/>
</dbReference>
<dbReference type="GO" id="GO:0009245">
    <property type="term" value="P:lipid A biosynthetic process"/>
    <property type="evidence" value="ECO:0007669"/>
    <property type="project" value="UniProtKB-KW"/>
</dbReference>
<dbReference type="GO" id="GO:0009103">
    <property type="term" value="P:lipopolysaccharide biosynthetic process"/>
    <property type="evidence" value="ECO:0007669"/>
    <property type="project" value="UniProtKB-UniRule"/>
</dbReference>
<dbReference type="GO" id="GO:0046677">
    <property type="term" value="P:response to antibiotic"/>
    <property type="evidence" value="ECO:0007669"/>
    <property type="project" value="UniProtKB-KW"/>
</dbReference>
<dbReference type="CDD" id="cd00616">
    <property type="entry name" value="AHBA_syn"/>
    <property type="match status" value="1"/>
</dbReference>
<dbReference type="FunFam" id="3.40.640.10:FF:000040">
    <property type="entry name" value="UDP-4-amino-4-deoxy-L-arabinose--oxoglutarate aminotransferase"/>
    <property type="match status" value="1"/>
</dbReference>
<dbReference type="FunFam" id="3.90.1150.10:FF:000030">
    <property type="entry name" value="UDP-4-amino-4-deoxy-L-arabinose--oxoglutarate aminotransferase"/>
    <property type="match status" value="1"/>
</dbReference>
<dbReference type="Gene3D" id="3.90.1150.10">
    <property type="entry name" value="Aspartate Aminotransferase, domain 1"/>
    <property type="match status" value="1"/>
</dbReference>
<dbReference type="Gene3D" id="3.40.640.10">
    <property type="entry name" value="Type I PLP-dependent aspartate aminotransferase-like (Major domain)"/>
    <property type="match status" value="1"/>
</dbReference>
<dbReference type="HAMAP" id="MF_01167">
    <property type="entry name" value="ArnB_transfer"/>
    <property type="match status" value="1"/>
</dbReference>
<dbReference type="InterPro" id="IPR022850">
    <property type="entry name" value="ArnB_NH2Trfase"/>
</dbReference>
<dbReference type="InterPro" id="IPR000653">
    <property type="entry name" value="DegT/StrS_aminotransferase"/>
</dbReference>
<dbReference type="InterPro" id="IPR015424">
    <property type="entry name" value="PyrdxlP-dep_Trfase"/>
</dbReference>
<dbReference type="InterPro" id="IPR015421">
    <property type="entry name" value="PyrdxlP-dep_Trfase_major"/>
</dbReference>
<dbReference type="InterPro" id="IPR015422">
    <property type="entry name" value="PyrdxlP-dep_Trfase_small"/>
</dbReference>
<dbReference type="NCBIfam" id="NF008658">
    <property type="entry name" value="PRK11658.1"/>
    <property type="match status" value="1"/>
</dbReference>
<dbReference type="PANTHER" id="PTHR30244:SF34">
    <property type="entry name" value="DTDP-4-AMINO-4,6-DIDEOXYGALACTOSE TRANSAMINASE"/>
    <property type="match status" value="1"/>
</dbReference>
<dbReference type="PANTHER" id="PTHR30244">
    <property type="entry name" value="TRANSAMINASE"/>
    <property type="match status" value="1"/>
</dbReference>
<dbReference type="Pfam" id="PF01041">
    <property type="entry name" value="DegT_DnrJ_EryC1"/>
    <property type="match status" value="1"/>
</dbReference>
<dbReference type="PIRSF" id="PIRSF000390">
    <property type="entry name" value="PLP_StrS"/>
    <property type="match status" value="1"/>
</dbReference>
<dbReference type="SUPFAM" id="SSF53383">
    <property type="entry name" value="PLP-dependent transferases"/>
    <property type="match status" value="1"/>
</dbReference>
<name>ARNB_PSEAB</name>
<gene>
    <name evidence="1" type="primary">arnB</name>
    <name type="ordered locus">PA14_18370</name>
</gene>
<feature type="chain" id="PRO_1000065686" description="UDP-4-amino-4-deoxy-L-arabinose--oxoglutarate aminotransferase">
    <location>
        <begin position="1"/>
        <end position="382"/>
    </location>
</feature>
<feature type="modified residue" description="N6-(pyridoxal phosphate)lysine" evidence="1">
    <location>
        <position position="183"/>
    </location>
</feature>
<organism>
    <name type="scientific">Pseudomonas aeruginosa (strain UCBPP-PA14)</name>
    <dbReference type="NCBI Taxonomy" id="208963"/>
    <lineage>
        <taxon>Bacteria</taxon>
        <taxon>Pseudomonadati</taxon>
        <taxon>Pseudomonadota</taxon>
        <taxon>Gammaproteobacteria</taxon>
        <taxon>Pseudomonadales</taxon>
        <taxon>Pseudomonadaceae</taxon>
        <taxon>Pseudomonas</taxon>
    </lineage>
</organism>
<reference key="1">
    <citation type="journal article" date="2006" name="Genome Biol.">
        <title>Genomic analysis reveals that Pseudomonas aeruginosa virulence is combinatorial.</title>
        <authorList>
            <person name="Lee D.G."/>
            <person name="Urbach J.M."/>
            <person name="Wu G."/>
            <person name="Liberati N.T."/>
            <person name="Feinbaum R.L."/>
            <person name="Miyata S."/>
            <person name="Diggins L.T."/>
            <person name="He J."/>
            <person name="Saucier M."/>
            <person name="Deziel E."/>
            <person name="Friedman L."/>
            <person name="Li L."/>
            <person name="Grills G."/>
            <person name="Montgomery K."/>
            <person name="Kucherlapati R."/>
            <person name="Rahme L.G."/>
            <person name="Ausubel F.M."/>
        </authorList>
    </citation>
    <scope>NUCLEOTIDE SEQUENCE [LARGE SCALE GENOMIC DNA]</scope>
    <source>
        <strain>UCBPP-PA14</strain>
    </source>
</reference>
<keyword id="KW-0032">Aminotransferase</keyword>
<keyword id="KW-0046">Antibiotic resistance</keyword>
<keyword id="KW-0441">Lipid A biosynthesis</keyword>
<keyword id="KW-0444">Lipid biosynthesis</keyword>
<keyword id="KW-0443">Lipid metabolism</keyword>
<keyword id="KW-0448">Lipopolysaccharide biosynthesis</keyword>
<keyword id="KW-0663">Pyridoxal phosphate</keyword>
<keyword id="KW-0808">Transferase</keyword>